<reference evidence="6" key="1">
    <citation type="journal article" date="2004" name="Proc. Natl. Acad. Sci. U.S.A.">
        <title>Genome sequence of the deep-sea gamma-proteobacterium Idiomarina loihiensis reveals amino acid fermentation as a source of carbon and energy.</title>
        <authorList>
            <person name="Hou S."/>
            <person name="Saw J.H."/>
            <person name="Lee K.S."/>
            <person name="Freitas T.A."/>
            <person name="Belisle C."/>
            <person name="Kawarabayasi Y."/>
            <person name="Donachie S.P."/>
            <person name="Pikina A."/>
            <person name="Galperin M.Y."/>
            <person name="Koonin E.V."/>
            <person name="Makarova K.S."/>
            <person name="Omelchenko M.V."/>
            <person name="Sorokin A."/>
            <person name="Wolf Y.I."/>
            <person name="Li Q.X."/>
            <person name="Keum Y.S."/>
            <person name="Campbell S."/>
            <person name="Denery J."/>
            <person name="Aizawa S."/>
            <person name="Shibata S."/>
            <person name="Malahoff A."/>
            <person name="Alam M."/>
        </authorList>
    </citation>
    <scope>NUCLEOTIDE SEQUENCE [LARGE SCALE GENOMIC DNA]</scope>
    <source>
        <strain evidence="6">ATCC BAA-735 / DSM 15497 / L2-TR</strain>
    </source>
</reference>
<reference evidence="3" key="2">
    <citation type="journal article" date="2015" name="Proc. Natl. Acad. Sci. U.S.A.">
        <title>Panoramic view of a superfamily of phosphatases through substrate profiling.</title>
        <authorList>
            <person name="Huang H."/>
            <person name="Pandya C."/>
            <person name="Liu C."/>
            <person name="Al-Obaidi N.F."/>
            <person name="Wang M."/>
            <person name="Zheng L."/>
            <person name="Toews Keating S."/>
            <person name="Aono M."/>
            <person name="Love J.D."/>
            <person name="Evans B."/>
            <person name="Seidel R.D."/>
            <person name="Hillerich B.S."/>
            <person name="Garforth S.J."/>
            <person name="Almo S.C."/>
            <person name="Mariano P.S."/>
            <person name="Dunaway-Mariano D."/>
            <person name="Allen K.N."/>
            <person name="Farelli J.D."/>
        </authorList>
    </citation>
    <scope>CATALYTIC ACTIVITY</scope>
    <scope>COFACTOR</scope>
</reference>
<accession>Q5QXU4</accession>
<sequence length="220" mass="23501">MKHSSGLIVFDMDSTLIHIECIDEIARLNNRYTKVSAITEAAMRGEIDFAESLTQRVACLEGIKESDLESLFSPIPFNPGAKELIQALQAAGWKTALVSGGFTWFANRVQAALNLDAVVANQLEVADGCLTGKVLGDIVDAQVKAEQLQQLAGHWNIPPDRTVAVGDGANDGLMLKAAAVGIAFNAKPALQAIADYSVNSNNLLEILGCLKQSELIEPVI</sequence>
<organism evidence="6">
    <name type="scientific">Idiomarina loihiensis (strain ATCC BAA-735 / DSM 15497 / L2-TR)</name>
    <dbReference type="NCBI Taxonomy" id="283942"/>
    <lineage>
        <taxon>Bacteria</taxon>
        <taxon>Pseudomonadati</taxon>
        <taxon>Pseudomonadota</taxon>
        <taxon>Gammaproteobacteria</taxon>
        <taxon>Alteromonadales</taxon>
        <taxon>Idiomarinaceae</taxon>
        <taxon>Idiomarina</taxon>
    </lineage>
</organism>
<evidence type="ECO:0000250" key="1">
    <source>
        <dbReference type="UniProtKB" id="Q58989"/>
    </source>
</evidence>
<evidence type="ECO:0000269" key="2">
    <source>
    </source>
</evidence>
<evidence type="ECO:0000305" key="3"/>
<evidence type="ECO:0000305" key="4">
    <source>
    </source>
</evidence>
<evidence type="ECO:0000312" key="5">
    <source>
        <dbReference type="EMBL" id="AAV82708.1"/>
    </source>
</evidence>
<evidence type="ECO:0000312" key="6">
    <source>
        <dbReference type="Proteomes" id="UP000001171"/>
    </source>
</evidence>
<feature type="chain" id="PRO_0000435616" description="Phosphoserine phosphatase" evidence="3">
    <location>
        <begin position="1"/>
        <end position="220"/>
    </location>
</feature>
<feature type="active site" description="Nucleophile" evidence="1">
    <location>
        <position position="11"/>
    </location>
</feature>
<feature type="active site" description="Proton donor" evidence="1">
    <location>
        <position position="13"/>
    </location>
</feature>
<feature type="binding site" evidence="1">
    <location>
        <position position="11"/>
    </location>
    <ligand>
        <name>Mg(2+)</name>
        <dbReference type="ChEBI" id="CHEBI:18420"/>
    </ligand>
</feature>
<feature type="binding site" evidence="1">
    <location>
        <position position="13"/>
    </location>
    <ligand>
        <name>Mg(2+)</name>
        <dbReference type="ChEBI" id="CHEBI:18420"/>
    </ligand>
</feature>
<feature type="binding site" evidence="1">
    <location>
        <position position="20"/>
    </location>
    <ligand>
        <name>substrate</name>
    </ligand>
</feature>
<feature type="binding site" evidence="1">
    <location>
        <position position="56"/>
    </location>
    <ligand>
        <name>substrate</name>
    </ligand>
</feature>
<feature type="binding site" evidence="1">
    <location>
        <begin position="99"/>
        <end position="100"/>
    </location>
    <ligand>
        <name>substrate</name>
    </ligand>
</feature>
<feature type="binding site" evidence="1">
    <location>
        <position position="144"/>
    </location>
    <ligand>
        <name>substrate</name>
    </ligand>
</feature>
<feature type="binding site" evidence="1">
    <location>
        <position position="167"/>
    </location>
    <ligand>
        <name>Mg(2+)</name>
        <dbReference type="ChEBI" id="CHEBI:18420"/>
    </ligand>
</feature>
<feature type="binding site" evidence="1">
    <location>
        <position position="170"/>
    </location>
    <ligand>
        <name>substrate</name>
    </ligand>
</feature>
<comment type="catalytic activity">
    <reaction evidence="2">
        <text>O-phospho-L-serine + H2O = L-serine + phosphate</text>
        <dbReference type="Rhea" id="RHEA:21208"/>
        <dbReference type="ChEBI" id="CHEBI:15377"/>
        <dbReference type="ChEBI" id="CHEBI:33384"/>
        <dbReference type="ChEBI" id="CHEBI:43474"/>
        <dbReference type="ChEBI" id="CHEBI:57524"/>
        <dbReference type="EC" id="3.1.3.3"/>
    </reaction>
</comment>
<comment type="catalytic activity">
    <reaction evidence="2">
        <text>O-phospho-D-serine + H2O = D-serine + phosphate</text>
        <dbReference type="Rhea" id="RHEA:24873"/>
        <dbReference type="ChEBI" id="CHEBI:15377"/>
        <dbReference type="ChEBI" id="CHEBI:35247"/>
        <dbReference type="ChEBI" id="CHEBI:43474"/>
        <dbReference type="ChEBI" id="CHEBI:58680"/>
        <dbReference type="EC" id="3.1.3.3"/>
    </reaction>
</comment>
<comment type="cofactor">
    <cofactor evidence="2">
        <name>Mg(2+)</name>
        <dbReference type="ChEBI" id="CHEBI:18420"/>
    </cofactor>
</comment>
<comment type="pathway">
    <text evidence="3">Amino-acid biosynthesis; L-serine biosynthesis; L-serine from 3-phospho-D-glycerate: step 3/3.</text>
</comment>
<comment type="similarity">
    <text evidence="3">Belongs to the HAD-like hydrolase superfamily. SerB family.</text>
</comment>
<proteinExistence type="evidence at protein level"/>
<gene>
    <name evidence="5" type="primary">serB_2</name>
    <name evidence="5" type="ordered locus">IL1876</name>
</gene>
<protein>
    <recommendedName>
        <fullName evidence="4">Phosphoserine phosphatase</fullName>
        <shortName evidence="1">PSP</shortName>
        <shortName evidence="1">PSPase</shortName>
        <ecNumber evidence="2">3.1.3.3</ecNumber>
    </recommendedName>
    <alternativeName>
        <fullName evidence="1">O-phosphoserine phosphohydrolase</fullName>
    </alternativeName>
</protein>
<name>SERB_IDILO</name>
<keyword id="KW-0028">Amino-acid biosynthesis</keyword>
<keyword id="KW-0378">Hydrolase</keyword>
<keyword id="KW-0460">Magnesium</keyword>
<keyword id="KW-0479">Metal-binding</keyword>
<keyword id="KW-1185">Reference proteome</keyword>
<keyword id="KW-0718">Serine biosynthesis</keyword>
<dbReference type="EC" id="3.1.3.3" evidence="2"/>
<dbReference type="EMBL" id="AE017340">
    <property type="protein sequence ID" value="AAV82708.1"/>
    <property type="molecule type" value="Genomic_DNA"/>
</dbReference>
<dbReference type="RefSeq" id="WP_011235108.1">
    <property type="nucleotide sequence ID" value="NC_006512.1"/>
</dbReference>
<dbReference type="SMR" id="Q5QXU4"/>
<dbReference type="STRING" id="283942.IL1876"/>
<dbReference type="GeneID" id="41337060"/>
<dbReference type="KEGG" id="ilo:IL1876"/>
<dbReference type="eggNOG" id="COG0560">
    <property type="taxonomic scope" value="Bacteria"/>
</dbReference>
<dbReference type="HOGENOM" id="CLU_036368_4_3_6"/>
<dbReference type="OrthoDB" id="9792539at2"/>
<dbReference type="UniPathway" id="UPA00135">
    <property type="reaction ID" value="UER00198"/>
</dbReference>
<dbReference type="Proteomes" id="UP000001171">
    <property type="component" value="Chromosome"/>
</dbReference>
<dbReference type="GO" id="GO:0005737">
    <property type="term" value="C:cytoplasm"/>
    <property type="evidence" value="ECO:0007669"/>
    <property type="project" value="TreeGrafter"/>
</dbReference>
<dbReference type="GO" id="GO:0036424">
    <property type="term" value="F:L-phosphoserine phosphatase activity"/>
    <property type="evidence" value="ECO:0007669"/>
    <property type="project" value="InterPro"/>
</dbReference>
<dbReference type="GO" id="GO:0000287">
    <property type="term" value="F:magnesium ion binding"/>
    <property type="evidence" value="ECO:0007669"/>
    <property type="project" value="TreeGrafter"/>
</dbReference>
<dbReference type="GO" id="GO:0006564">
    <property type="term" value="P:L-serine biosynthetic process"/>
    <property type="evidence" value="ECO:0007669"/>
    <property type="project" value="UniProtKB-KW"/>
</dbReference>
<dbReference type="CDD" id="cd07500">
    <property type="entry name" value="HAD_PSP"/>
    <property type="match status" value="1"/>
</dbReference>
<dbReference type="Gene3D" id="3.40.50.1000">
    <property type="entry name" value="HAD superfamily/HAD-like"/>
    <property type="match status" value="1"/>
</dbReference>
<dbReference type="InterPro" id="IPR050582">
    <property type="entry name" value="HAD-like_SerB"/>
</dbReference>
<dbReference type="InterPro" id="IPR036412">
    <property type="entry name" value="HAD-like_sf"/>
</dbReference>
<dbReference type="InterPro" id="IPR023214">
    <property type="entry name" value="HAD_sf"/>
</dbReference>
<dbReference type="InterPro" id="IPR004469">
    <property type="entry name" value="PSP"/>
</dbReference>
<dbReference type="NCBIfam" id="TIGR01488">
    <property type="entry name" value="HAD-SF-IB"/>
    <property type="match status" value="1"/>
</dbReference>
<dbReference type="NCBIfam" id="TIGR00338">
    <property type="entry name" value="serB"/>
    <property type="match status" value="1"/>
</dbReference>
<dbReference type="PANTHER" id="PTHR43344">
    <property type="entry name" value="PHOSPHOSERINE PHOSPHATASE"/>
    <property type="match status" value="1"/>
</dbReference>
<dbReference type="PANTHER" id="PTHR43344:SF2">
    <property type="entry name" value="PHOSPHOSERINE PHOSPHATASE"/>
    <property type="match status" value="1"/>
</dbReference>
<dbReference type="Pfam" id="PF12710">
    <property type="entry name" value="HAD"/>
    <property type="match status" value="1"/>
</dbReference>
<dbReference type="SFLD" id="SFLDG01136">
    <property type="entry name" value="C1.6:_Phosphoserine_Phosphatas"/>
    <property type="match status" value="1"/>
</dbReference>
<dbReference type="SFLD" id="SFLDF00029">
    <property type="entry name" value="phosphoserine_phosphatase"/>
    <property type="match status" value="1"/>
</dbReference>
<dbReference type="SUPFAM" id="SSF56784">
    <property type="entry name" value="HAD-like"/>
    <property type="match status" value="1"/>
</dbReference>